<evidence type="ECO:0000250" key="1"/>
<evidence type="ECO:0000255" key="2">
    <source>
        <dbReference type="PROSITE-ProRule" id="PRU00176"/>
    </source>
</evidence>
<evidence type="ECO:0000255" key="3">
    <source>
        <dbReference type="PROSITE-ProRule" id="PRU00723"/>
    </source>
</evidence>
<evidence type="ECO:0000256" key="4">
    <source>
        <dbReference type="SAM" id="MobiDB-lite"/>
    </source>
</evidence>
<evidence type="ECO:0000269" key="5">
    <source>
    </source>
</evidence>
<evidence type="ECO:0000269" key="6">
    <source>
    </source>
</evidence>
<evidence type="ECO:0000269" key="7">
    <source>
    </source>
</evidence>
<evidence type="ECO:0000269" key="8">
    <source>
    </source>
</evidence>
<evidence type="ECO:0000269" key="9">
    <source>
    </source>
</evidence>
<evidence type="ECO:0000269" key="10">
    <source>
    </source>
</evidence>
<evidence type="ECO:0000269" key="11">
    <source>
    </source>
</evidence>
<evidence type="ECO:0000269" key="12">
    <source>
    </source>
</evidence>
<evidence type="ECO:0000269" key="13">
    <source>
    </source>
</evidence>
<evidence type="ECO:0000269" key="14">
    <source>
    </source>
</evidence>
<evidence type="ECO:0000269" key="15">
    <source>
    </source>
</evidence>
<evidence type="ECO:0000269" key="16">
    <source>
    </source>
</evidence>
<evidence type="ECO:0000303" key="17">
    <source>
    </source>
</evidence>
<evidence type="ECO:0000305" key="18"/>
<evidence type="ECO:0007744" key="19">
    <source>
        <dbReference type="PDB" id="5MQF"/>
    </source>
</evidence>
<evidence type="ECO:0007744" key="20">
    <source>
        <dbReference type="PDB" id="5XJC"/>
    </source>
</evidence>
<evidence type="ECO:0007744" key="21">
    <source>
        <dbReference type="PDB" id="5YZG"/>
    </source>
</evidence>
<evidence type="ECO:0007744" key="22">
    <source>
        <dbReference type="PDB" id="5Z56"/>
    </source>
</evidence>
<evidence type="ECO:0007744" key="23">
    <source>
        <dbReference type="PDB" id="5Z57"/>
    </source>
</evidence>
<evidence type="ECO:0007744" key="24">
    <source>
        <dbReference type="PDB" id="6FF4"/>
    </source>
</evidence>
<evidence type="ECO:0007744" key="25">
    <source>
        <dbReference type="PDB" id="6QDV"/>
    </source>
</evidence>
<evidence type="ECO:0007744" key="26">
    <source>
    </source>
</evidence>
<evidence type="ECO:0007744" key="27">
    <source>
    </source>
</evidence>
<evidence type="ECO:0007744" key="28">
    <source>
    </source>
</evidence>
<evidence type="ECO:0007744" key="29">
    <source>
    </source>
</evidence>
<evidence type="ECO:0007744" key="30">
    <source>
    </source>
</evidence>
<evidence type="ECO:0007744" key="31">
    <source>
    </source>
</evidence>
<evidence type="ECO:0007744" key="32">
    <source>
    </source>
</evidence>
<evidence type="ECO:0007829" key="33">
    <source>
        <dbReference type="PDB" id="6ICZ"/>
    </source>
</evidence>
<evidence type="ECO:0007829" key="34">
    <source>
        <dbReference type="PDB" id="6ID0"/>
    </source>
</evidence>
<evidence type="ECO:0007829" key="35">
    <source>
        <dbReference type="PDB" id="6ID1"/>
    </source>
</evidence>
<evidence type="ECO:0007829" key="36">
    <source>
        <dbReference type="PDB" id="7QTT"/>
    </source>
</evidence>
<proteinExistence type="evidence at protein level"/>
<dbReference type="EMBL" id="AL136933">
    <property type="protein sequence ID" value="CAB66867.1"/>
    <property type="molecule type" value="mRNA"/>
</dbReference>
<dbReference type="EMBL" id="AK001152">
    <property type="protein sequence ID" value="BAA91521.1"/>
    <property type="molecule type" value="mRNA"/>
</dbReference>
<dbReference type="EMBL" id="AK297019">
    <property type="protein sequence ID" value="BAG59551.1"/>
    <property type="molecule type" value="mRNA"/>
</dbReference>
<dbReference type="EMBL" id="AC008453">
    <property type="status" value="NOT_ANNOTATED_CDS"/>
    <property type="molecule type" value="Genomic_DNA"/>
</dbReference>
<dbReference type="EMBL" id="CH471062">
    <property type="protein sequence ID" value="EAW61711.1"/>
    <property type="molecule type" value="Genomic_DNA"/>
</dbReference>
<dbReference type="EMBL" id="BC003402">
    <property type="protein sequence ID" value="AAH03402.1"/>
    <property type="molecule type" value="mRNA"/>
</dbReference>
<dbReference type="EMBL" id="U39402">
    <property type="protein sequence ID" value="AAC99998.1"/>
    <property type="status" value="ALT_SEQ"/>
    <property type="molecule type" value="mRNA"/>
</dbReference>
<dbReference type="CCDS" id="CCDS34278.1">
    <molecule id="Q9NW64-1"/>
</dbReference>
<dbReference type="RefSeq" id="NP_060517.1">
    <molecule id="Q9NW64-1"/>
    <property type="nucleotide sequence ID" value="NM_018047.3"/>
</dbReference>
<dbReference type="PDB" id="2YTC">
    <property type="method" value="NMR"/>
    <property type="chains" value="A=227-304"/>
</dbReference>
<dbReference type="PDB" id="5MQF">
    <property type="method" value="EM"/>
    <property type="resolution" value="5.90 A"/>
    <property type="chains" value="P=1-420"/>
</dbReference>
<dbReference type="PDB" id="5XJC">
    <property type="method" value="EM"/>
    <property type="resolution" value="3.60 A"/>
    <property type="chains" value="O=1-420"/>
</dbReference>
<dbReference type="PDB" id="5YZG">
    <property type="method" value="EM"/>
    <property type="resolution" value="4.10 A"/>
    <property type="chains" value="O=1-420"/>
</dbReference>
<dbReference type="PDB" id="5Z56">
    <property type="method" value="EM"/>
    <property type="resolution" value="5.10 A"/>
    <property type="chains" value="O=1-420"/>
</dbReference>
<dbReference type="PDB" id="5Z57">
    <property type="method" value="EM"/>
    <property type="resolution" value="6.50 A"/>
    <property type="chains" value="O=1-420"/>
</dbReference>
<dbReference type="PDB" id="6FF4">
    <property type="method" value="EM"/>
    <property type="resolution" value="16.00 A"/>
    <property type="chains" value="P=1-420"/>
</dbReference>
<dbReference type="PDB" id="6FF7">
    <property type="method" value="EM"/>
    <property type="resolution" value="4.50 A"/>
    <property type="chains" value="P=1-420"/>
</dbReference>
<dbReference type="PDB" id="6ICZ">
    <property type="method" value="EM"/>
    <property type="resolution" value="3.00 A"/>
    <property type="chains" value="O=1-420"/>
</dbReference>
<dbReference type="PDB" id="6ID0">
    <property type="method" value="EM"/>
    <property type="resolution" value="2.90 A"/>
    <property type="chains" value="O=1-420"/>
</dbReference>
<dbReference type="PDB" id="6ID1">
    <property type="method" value="EM"/>
    <property type="resolution" value="2.86 A"/>
    <property type="chains" value="O=1-420"/>
</dbReference>
<dbReference type="PDB" id="6QDV">
    <property type="method" value="EM"/>
    <property type="resolution" value="3.30 A"/>
    <property type="chains" value="M=18-306"/>
</dbReference>
<dbReference type="PDB" id="6ZYM">
    <property type="method" value="EM"/>
    <property type="resolution" value="3.40 A"/>
    <property type="chains" value="P=1-218"/>
</dbReference>
<dbReference type="PDB" id="7A5P">
    <property type="method" value="EM"/>
    <property type="resolution" value="5.00 A"/>
    <property type="chains" value="P=1-420"/>
</dbReference>
<dbReference type="PDB" id="7AAV">
    <property type="method" value="EM"/>
    <property type="resolution" value="4.20 A"/>
    <property type="chains" value="P=1-420"/>
</dbReference>
<dbReference type="PDB" id="7ABG">
    <property type="method" value="EM"/>
    <property type="resolution" value="7.80 A"/>
    <property type="chains" value="P=1-420"/>
</dbReference>
<dbReference type="PDB" id="7ABI">
    <property type="method" value="EM"/>
    <property type="resolution" value="8.00 A"/>
    <property type="chains" value="P=1-420"/>
</dbReference>
<dbReference type="PDB" id="7QTT">
    <property type="method" value="EM"/>
    <property type="resolution" value="3.10 A"/>
    <property type="chains" value="U=1-420"/>
</dbReference>
<dbReference type="PDB" id="7W59">
    <property type="method" value="EM"/>
    <property type="resolution" value="3.60 A"/>
    <property type="chains" value="O=1-420"/>
</dbReference>
<dbReference type="PDB" id="7W5A">
    <property type="method" value="EM"/>
    <property type="resolution" value="3.60 A"/>
    <property type="chains" value="O=1-420"/>
</dbReference>
<dbReference type="PDB" id="7W5B">
    <property type="method" value="EM"/>
    <property type="resolution" value="4.30 A"/>
    <property type="chains" value="O=1-420"/>
</dbReference>
<dbReference type="PDB" id="8C6J">
    <property type="method" value="EM"/>
    <property type="resolution" value="2.80 A"/>
    <property type="chains" value="M=1-420"/>
</dbReference>
<dbReference type="PDB" id="8CH6">
    <property type="method" value="EM"/>
    <property type="resolution" value="5.90 A"/>
    <property type="chains" value="U=1-420"/>
</dbReference>
<dbReference type="PDB" id="8I0P">
    <property type="method" value="EM"/>
    <property type="resolution" value="3.40 A"/>
    <property type="chains" value="O=1-420"/>
</dbReference>
<dbReference type="PDB" id="8I0R">
    <property type="method" value="EM"/>
    <property type="resolution" value="3.00 A"/>
    <property type="chains" value="O=1-420"/>
</dbReference>
<dbReference type="PDB" id="8I0S">
    <property type="method" value="EM"/>
    <property type="resolution" value="4.20 A"/>
    <property type="chains" value="O=1-420"/>
</dbReference>
<dbReference type="PDB" id="8I0T">
    <property type="method" value="EM"/>
    <property type="resolution" value="3.00 A"/>
    <property type="chains" value="O=1-420"/>
</dbReference>
<dbReference type="PDB" id="8I0U">
    <property type="method" value="EM"/>
    <property type="resolution" value="3.30 A"/>
    <property type="chains" value="O=1-420"/>
</dbReference>
<dbReference type="PDB" id="8I0V">
    <property type="method" value="EM"/>
    <property type="resolution" value="3.00 A"/>
    <property type="chains" value="O=1-420"/>
</dbReference>
<dbReference type="PDB" id="8I0W">
    <property type="method" value="EM"/>
    <property type="resolution" value="3.40 A"/>
    <property type="chains" value="O=1-420"/>
</dbReference>
<dbReference type="PDB" id="8RO2">
    <property type="method" value="EM"/>
    <property type="resolution" value="3.50 A"/>
    <property type="chains" value="O=1-420"/>
</dbReference>
<dbReference type="PDB" id="9FMD">
    <property type="method" value="EM"/>
    <property type="resolution" value="3.30 A"/>
    <property type="chains" value="O=1-420"/>
</dbReference>
<dbReference type="PDBsum" id="2YTC"/>
<dbReference type="PDBsum" id="5MQF"/>
<dbReference type="PDBsum" id="5XJC"/>
<dbReference type="PDBsum" id="5YZG"/>
<dbReference type="PDBsum" id="5Z56"/>
<dbReference type="PDBsum" id="5Z57"/>
<dbReference type="PDBsum" id="6FF4"/>
<dbReference type="PDBsum" id="6FF7"/>
<dbReference type="PDBsum" id="6ICZ"/>
<dbReference type="PDBsum" id="6ID0"/>
<dbReference type="PDBsum" id="6ID1"/>
<dbReference type="PDBsum" id="6QDV"/>
<dbReference type="PDBsum" id="6ZYM"/>
<dbReference type="PDBsum" id="7A5P"/>
<dbReference type="PDBsum" id="7AAV"/>
<dbReference type="PDBsum" id="7ABG"/>
<dbReference type="PDBsum" id="7ABI"/>
<dbReference type="PDBsum" id="7QTT"/>
<dbReference type="PDBsum" id="7W59"/>
<dbReference type="PDBsum" id="7W5A"/>
<dbReference type="PDBsum" id="7W5B"/>
<dbReference type="PDBsum" id="8C6J"/>
<dbReference type="PDBsum" id="8CH6"/>
<dbReference type="PDBsum" id="8I0P"/>
<dbReference type="PDBsum" id="8I0R"/>
<dbReference type="PDBsum" id="8I0S"/>
<dbReference type="PDBsum" id="8I0T"/>
<dbReference type="PDBsum" id="8I0U"/>
<dbReference type="PDBsum" id="8I0V"/>
<dbReference type="PDBsum" id="8I0W"/>
<dbReference type="PDBsum" id="8RO2"/>
<dbReference type="PDBsum" id="9FMD"/>
<dbReference type="EMDB" id="EMD-11569"/>
<dbReference type="EMDB" id="EMD-11693"/>
<dbReference type="EMDB" id="EMD-11695"/>
<dbReference type="EMDB" id="EMD-11697"/>
<dbReference type="EMDB" id="EMD-14146"/>
<dbReference type="EMDB" id="EMD-16452"/>
<dbReference type="EMDB" id="EMD-16658"/>
<dbReference type="EMDB" id="EMD-19399"/>
<dbReference type="EMDB" id="EMD-32317"/>
<dbReference type="EMDB" id="EMD-32319"/>
<dbReference type="EMDB" id="EMD-32321"/>
<dbReference type="EMDB" id="EMD-35105"/>
<dbReference type="EMDB" id="EMD-35107"/>
<dbReference type="EMDB" id="EMD-35108"/>
<dbReference type="EMDB" id="EMD-35109"/>
<dbReference type="EMDB" id="EMD-35110"/>
<dbReference type="EMDB" id="EMD-35111"/>
<dbReference type="EMDB" id="EMD-35113"/>
<dbReference type="EMDB" id="EMD-3545"/>
<dbReference type="EMDB" id="EMD-4255"/>
<dbReference type="EMDB" id="EMD-4525"/>
<dbReference type="EMDB" id="EMD-6721"/>
<dbReference type="EMDB" id="EMD-6864"/>
<dbReference type="EMDB" id="EMD-6889"/>
<dbReference type="EMDB" id="EMD-6890"/>
<dbReference type="EMDB" id="EMD-9645"/>
<dbReference type="EMDB" id="EMD-9646"/>
<dbReference type="EMDB" id="EMD-9647"/>
<dbReference type="SMR" id="Q9NW64"/>
<dbReference type="BioGRID" id="120821">
    <property type="interactions" value="212"/>
</dbReference>
<dbReference type="CORUM" id="Q9NW64"/>
<dbReference type="FunCoup" id="Q9NW64">
    <property type="interactions" value="3948"/>
</dbReference>
<dbReference type="IntAct" id="Q9NW64">
    <property type="interactions" value="109"/>
</dbReference>
<dbReference type="MINT" id="Q9NW64"/>
<dbReference type="STRING" id="9606.ENSP00000199814"/>
<dbReference type="GlyGen" id="Q9NW64">
    <property type="glycosylation" value="1 site, 1 O-linked glycan (1 site)"/>
</dbReference>
<dbReference type="iPTMnet" id="Q9NW64"/>
<dbReference type="MetOSite" id="Q9NW64"/>
<dbReference type="PhosphoSitePlus" id="Q9NW64"/>
<dbReference type="SwissPalm" id="Q9NW64"/>
<dbReference type="BioMuta" id="RBM22"/>
<dbReference type="DMDM" id="74762758"/>
<dbReference type="jPOST" id="Q9NW64"/>
<dbReference type="MassIVE" id="Q9NW64"/>
<dbReference type="PaxDb" id="9606-ENSP00000199814"/>
<dbReference type="PeptideAtlas" id="Q9NW64"/>
<dbReference type="ProteomicsDB" id="82897">
    <molecule id="Q9NW64-1"/>
</dbReference>
<dbReference type="ProteomicsDB" id="82898">
    <molecule id="Q9NW64-2"/>
</dbReference>
<dbReference type="Pumba" id="Q9NW64"/>
<dbReference type="Antibodypedia" id="1177">
    <property type="antibodies" value="186 antibodies from 28 providers"/>
</dbReference>
<dbReference type="DNASU" id="55696"/>
<dbReference type="Ensembl" id="ENST00000199814.9">
    <molecule id="Q9NW64-1"/>
    <property type="protein sequence ID" value="ENSP00000199814.4"/>
    <property type="gene ID" value="ENSG00000086589.12"/>
</dbReference>
<dbReference type="Ensembl" id="ENST00000447771.6">
    <molecule id="Q9NW64-2"/>
    <property type="protein sequence ID" value="ENSP00000412118.2"/>
    <property type="gene ID" value="ENSG00000086589.12"/>
</dbReference>
<dbReference type="GeneID" id="55696"/>
<dbReference type="KEGG" id="hsa:55696"/>
<dbReference type="MANE-Select" id="ENST00000199814.9">
    <property type="protein sequence ID" value="ENSP00000199814.4"/>
    <property type="RefSeq nucleotide sequence ID" value="NM_018047.3"/>
    <property type="RefSeq protein sequence ID" value="NP_060517.1"/>
</dbReference>
<dbReference type="UCSC" id="uc003lst.4">
    <molecule id="Q9NW64-1"/>
    <property type="organism name" value="human"/>
</dbReference>
<dbReference type="AGR" id="HGNC:25503"/>
<dbReference type="CTD" id="55696"/>
<dbReference type="DisGeNET" id="55696"/>
<dbReference type="GeneCards" id="RBM22"/>
<dbReference type="HGNC" id="HGNC:25503">
    <property type="gene designation" value="RBM22"/>
</dbReference>
<dbReference type="HPA" id="ENSG00000086589">
    <property type="expression patterns" value="Low tissue specificity"/>
</dbReference>
<dbReference type="MIM" id="612430">
    <property type="type" value="gene"/>
</dbReference>
<dbReference type="neXtProt" id="NX_Q9NW64"/>
<dbReference type="OpenTargets" id="ENSG00000086589"/>
<dbReference type="PharmGKB" id="PA134982384"/>
<dbReference type="VEuPathDB" id="HostDB:ENSG00000086589"/>
<dbReference type="eggNOG" id="KOG0153">
    <property type="taxonomic scope" value="Eukaryota"/>
</dbReference>
<dbReference type="GeneTree" id="ENSGT00390000002792"/>
<dbReference type="HOGENOM" id="CLU_027112_3_0_1"/>
<dbReference type="InParanoid" id="Q9NW64"/>
<dbReference type="OMA" id="CPLRVQW"/>
<dbReference type="OrthoDB" id="10259600at2759"/>
<dbReference type="PAN-GO" id="Q9NW64">
    <property type="GO annotations" value="5 GO annotations based on evolutionary models"/>
</dbReference>
<dbReference type="PhylomeDB" id="Q9NW64"/>
<dbReference type="TreeFam" id="TF314284"/>
<dbReference type="PathwayCommons" id="Q9NW64"/>
<dbReference type="Reactome" id="R-HSA-72163">
    <property type="pathway name" value="mRNA Splicing - Major Pathway"/>
</dbReference>
<dbReference type="SignaLink" id="Q9NW64"/>
<dbReference type="BioGRID-ORCS" id="55696">
    <property type="hits" value="737 hits in 1165 CRISPR screens"/>
</dbReference>
<dbReference type="EvolutionaryTrace" id="Q9NW64"/>
<dbReference type="GeneWiki" id="RBM22"/>
<dbReference type="GenomeRNAi" id="55696"/>
<dbReference type="Pharos" id="Q9NW64">
    <property type="development level" value="Tbio"/>
</dbReference>
<dbReference type="PRO" id="PR:Q9NW64"/>
<dbReference type="Proteomes" id="UP000005640">
    <property type="component" value="Chromosome 5"/>
</dbReference>
<dbReference type="RNAct" id="Q9NW64">
    <property type="molecule type" value="protein"/>
</dbReference>
<dbReference type="Bgee" id="ENSG00000086589">
    <property type="expression patterns" value="Expressed in tibia and 202 other cell types or tissues"/>
</dbReference>
<dbReference type="ExpressionAtlas" id="Q9NW64">
    <property type="expression patterns" value="baseline and differential"/>
</dbReference>
<dbReference type="GO" id="GO:0071013">
    <property type="term" value="C:catalytic step 2 spliceosome"/>
    <property type="evidence" value="ECO:0000314"/>
    <property type="project" value="UniProtKB"/>
</dbReference>
<dbReference type="GO" id="GO:0005737">
    <property type="term" value="C:cytoplasm"/>
    <property type="evidence" value="ECO:0000314"/>
    <property type="project" value="UniProtKB"/>
</dbReference>
<dbReference type="GO" id="GO:0005654">
    <property type="term" value="C:nucleoplasm"/>
    <property type="evidence" value="ECO:0000314"/>
    <property type="project" value="HPA"/>
</dbReference>
<dbReference type="GO" id="GO:0005634">
    <property type="term" value="C:nucleus"/>
    <property type="evidence" value="ECO:0000314"/>
    <property type="project" value="UniProtKB"/>
</dbReference>
<dbReference type="GO" id="GO:0000974">
    <property type="term" value="C:Prp19 complex"/>
    <property type="evidence" value="ECO:0000318"/>
    <property type="project" value="GO_Central"/>
</dbReference>
<dbReference type="GO" id="GO:0071006">
    <property type="term" value="C:U2-type catalytic step 1 spliceosome"/>
    <property type="evidence" value="ECO:0000318"/>
    <property type="project" value="GO_Central"/>
</dbReference>
<dbReference type="GO" id="GO:0071007">
    <property type="term" value="C:U2-type catalytic step 2 spliceosome"/>
    <property type="evidence" value="ECO:0000314"/>
    <property type="project" value="UniProtKB"/>
</dbReference>
<dbReference type="GO" id="GO:0048306">
    <property type="term" value="F:calcium-dependent protein binding"/>
    <property type="evidence" value="ECO:0000353"/>
    <property type="project" value="UniProtKB"/>
</dbReference>
<dbReference type="GO" id="GO:0036002">
    <property type="term" value="F:pre-mRNA binding"/>
    <property type="evidence" value="ECO:0000314"/>
    <property type="project" value="UniProtKB"/>
</dbReference>
<dbReference type="GO" id="GO:0003723">
    <property type="term" value="F:RNA binding"/>
    <property type="evidence" value="ECO:0007005"/>
    <property type="project" value="UniProtKB"/>
</dbReference>
<dbReference type="GO" id="GO:0017070">
    <property type="term" value="F:U6 snRNA binding"/>
    <property type="evidence" value="ECO:0000314"/>
    <property type="project" value="UniProtKB"/>
</dbReference>
<dbReference type="GO" id="GO:0008270">
    <property type="term" value="F:zinc ion binding"/>
    <property type="evidence" value="ECO:0007669"/>
    <property type="project" value="UniProtKB-KW"/>
</dbReference>
<dbReference type="GO" id="GO:0071466">
    <property type="term" value="P:cellular response to xenobiotic stimulus"/>
    <property type="evidence" value="ECO:0000314"/>
    <property type="project" value="UniProtKB"/>
</dbReference>
<dbReference type="GO" id="GO:0045292">
    <property type="term" value="P:mRNA cis splicing, via spliceosome"/>
    <property type="evidence" value="ECO:0000314"/>
    <property type="project" value="UniProtKB"/>
</dbReference>
<dbReference type="GO" id="GO:0000398">
    <property type="term" value="P:mRNA splicing, via spliceosome"/>
    <property type="evidence" value="ECO:0000305"/>
    <property type="project" value="UniProtKB"/>
</dbReference>
<dbReference type="GO" id="GO:0046827">
    <property type="term" value="P:positive regulation of protein export from nucleus"/>
    <property type="evidence" value="ECO:0000314"/>
    <property type="project" value="UniProtKB"/>
</dbReference>
<dbReference type="GO" id="GO:0042307">
    <property type="term" value="P:positive regulation of protein import into nucleus"/>
    <property type="evidence" value="ECO:0000314"/>
    <property type="project" value="UniProtKB"/>
</dbReference>
<dbReference type="GO" id="GO:0033120">
    <property type="term" value="P:positive regulation of RNA splicing"/>
    <property type="evidence" value="ECO:0000314"/>
    <property type="project" value="UniProtKB"/>
</dbReference>
<dbReference type="CDD" id="cd12224">
    <property type="entry name" value="RRM_RBM22"/>
    <property type="match status" value="1"/>
</dbReference>
<dbReference type="FunFam" id="3.30.70.330:FF:000137">
    <property type="entry name" value="pre-mRNA-splicing factor RBM22"/>
    <property type="match status" value="1"/>
</dbReference>
<dbReference type="FunFam" id="4.10.1000.10:FF:000006">
    <property type="entry name" value="Putative pre-mrna-splicing factor rbm22"/>
    <property type="match status" value="1"/>
</dbReference>
<dbReference type="Gene3D" id="3.30.70.330">
    <property type="match status" value="1"/>
</dbReference>
<dbReference type="Gene3D" id="4.10.1000.10">
    <property type="entry name" value="Zinc finger, CCCH-type"/>
    <property type="match status" value="1"/>
</dbReference>
<dbReference type="InterPro" id="IPR039171">
    <property type="entry name" value="Cwc2/Slt11"/>
</dbReference>
<dbReference type="InterPro" id="IPR012677">
    <property type="entry name" value="Nucleotide-bd_a/b_plait_sf"/>
</dbReference>
<dbReference type="InterPro" id="IPR035979">
    <property type="entry name" value="RBD_domain_sf"/>
</dbReference>
<dbReference type="InterPro" id="IPR000504">
    <property type="entry name" value="RRM_dom"/>
</dbReference>
<dbReference type="InterPro" id="IPR048995">
    <property type="entry name" value="STL11/RBM22-like_N"/>
</dbReference>
<dbReference type="InterPro" id="IPR000571">
    <property type="entry name" value="Znf_CCCH"/>
</dbReference>
<dbReference type="InterPro" id="IPR036855">
    <property type="entry name" value="Znf_CCCH_sf"/>
</dbReference>
<dbReference type="PANTHER" id="PTHR14089">
    <property type="entry name" value="PRE-MRNA-SPLICING FACTOR RBM22"/>
    <property type="match status" value="1"/>
</dbReference>
<dbReference type="PANTHER" id="PTHR14089:SF18">
    <property type="entry name" value="PRE-MRNA-SPLICING FACTOR RBM22"/>
    <property type="match status" value="1"/>
</dbReference>
<dbReference type="Pfam" id="PF00076">
    <property type="entry name" value="RRM_1"/>
    <property type="match status" value="1"/>
</dbReference>
<dbReference type="Pfam" id="PF21369">
    <property type="entry name" value="STL11_N"/>
    <property type="match status" value="1"/>
</dbReference>
<dbReference type="SMART" id="SM00360">
    <property type="entry name" value="RRM"/>
    <property type="match status" value="1"/>
</dbReference>
<dbReference type="SMART" id="SM00356">
    <property type="entry name" value="ZnF_C3H1"/>
    <property type="match status" value="1"/>
</dbReference>
<dbReference type="SUPFAM" id="SSF90229">
    <property type="entry name" value="CCCH zinc finger"/>
    <property type="match status" value="1"/>
</dbReference>
<dbReference type="SUPFAM" id="SSF54928">
    <property type="entry name" value="RNA-binding domain, RBD"/>
    <property type="match status" value="1"/>
</dbReference>
<dbReference type="PROSITE" id="PS50102">
    <property type="entry name" value="RRM"/>
    <property type="match status" value="1"/>
</dbReference>
<dbReference type="PROSITE" id="PS50103">
    <property type="entry name" value="ZF_C3H1"/>
    <property type="match status" value="1"/>
</dbReference>
<reference key="1">
    <citation type="journal article" date="2001" name="Genome Res.">
        <title>Towards a catalog of human genes and proteins: sequencing and analysis of 500 novel complete protein coding human cDNAs.</title>
        <authorList>
            <person name="Wiemann S."/>
            <person name="Weil B."/>
            <person name="Wellenreuther R."/>
            <person name="Gassenhuber J."/>
            <person name="Glassl S."/>
            <person name="Ansorge W."/>
            <person name="Boecher M."/>
            <person name="Bloecker H."/>
            <person name="Bauersachs S."/>
            <person name="Blum H."/>
            <person name="Lauber J."/>
            <person name="Duesterhoeft A."/>
            <person name="Beyer A."/>
            <person name="Koehrer K."/>
            <person name="Strack N."/>
            <person name="Mewes H.-W."/>
            <person name="Ottenwaelder B."/>
            <person name="Obermaier B."/>
            <person name="Tampe J."/>
            <person name="Heubner D."/>
            <person name="Wambutt R."/>
            <person name="Korn B."/>
            <person name="Klein M."/>
            <person name="Poustka A."/>
        </authorList>
    </citation>
    <scope>NUCLEOTIDE SEQUENCE [LARGE SCALE MRNA] (ISOFORM 1)</scope>
    <source>
        <tissue>Uterus</tissue>
    </source>
</reference>
<reference key="2">
    <citation type="journal article" date="2004" name="Nat. Genet.">
        <title>Complete sequencing and characterization of 21,243 full-length human cDNAs.</title>
        <authorList>
            <person name="Ota T."/>
            <person name="Suzuki Y."/>
            <person name="Nishikawa T."/>
            <person name="Otsuki T."/>
            <person name="Sugiyama T."/>
            <person name="Irie R."/>
            <person name="Wakamatsu A."/>
            <person name="Hayashi K."/>
            <person name="Sato H."/>
            <person name="Nagai K."/>
            <person name="Kimura K."/>
            <person name="Makita H."/>
            <person name="Sekine M."/>
            <person name="Obayashi M."/>
            <person name="Nishi T."/>
            <person name="Shibahara T."/>
            <person name="Tanaka T."/>
            <person name="Ishii S."/>
            <person name="Yamamoto J."/>
            <person name="Saito K."/>
            <person name="Kawai Y."/>
            <person name="Isono Y."/>
            <person name="Nakamura Y."/>
            <person name="Nagahari K."/>
            <person name="Murakami K."/>
            <person name="Yasuda T."/>
            <person name="Iwayanagi T."/>
            <person name="Wagatsuma M."/>
            <person name="Shiratori A."/>
            <person name="Sudo H."/>
            <person name="Hosoiri T."/>
            <person name="Kaku Y."/>
            <person name="Kodaira H."/>
            <person name="Kondo H."/>
            <person name="Sugawara M."/>
            <person name="Takahashi M."/>
            <person name="Kanda K."/>
            <person name="Yokoi T."/>
            <person name="Furuya T."/>
            <person name="Kikkawa E."/>
            <person name="Omura Y."/>
            <person name="Abe K."/>
            <person name="Kamihara K."/>
            <person name="Katsuta N."/>
            <person name="Sato K."/>
            <person name="Tanikawa M."/>
            <person name="Yamazaki M."/>
            <person name="Ninomiya K."/>
            <person name="Ishibashi T."/>
            <person name="Yamashita H."/>
            <person name="Murakawa K."/>
            <person name="Fujimori K."/>
            <person name="Tanai H."/>
            <person name="Kimata M."/>
            <person name="Watanabe M."/>
            <person name="Hiraoka S."/>
            <person name="Chiba Y."/>
            <person name="Ishida S."/>
            <person name="Ono Y."/>
            <person name="Takiguchi S."/>
            <person name="Watanabe S."/>
            <person name="Yosida M."/>
            <person name="Hotuta T."/>
            <person name="Kusano J."/>
            <person name="Kanehori K."/>
            <person name="Takahashi-Fujii A."/>
            <person name="Hara H."/>
            <person name="Tanase T.-O."/>
            <person name="Nomura Y."/>
            <person name="Togiya S."/>
            <person name="Komai F."/>
            <person name="Hara R."/>
            <person name="Takeuchi K."/>
            <person name="Arita M."/>
            <person name="Imose N."/>
            <person name="Musashino K."/>
            <person name="Yuuki H."/>
            <person name="Oshima A."/>
            <person name="Sasaki N."/>
            <person name="Aotsuka S."/>
            <person name="Yoshikawa Y."/>
            <person name="Matsunawa H."/>
            <person name="Ichihara T."/>
            <person name="Shiohata N."/>
            <person name="Sano S."/>
            <person name="Moriya S."/>
            <person name="Momiyama H."/>
            <person name="Satoh N."/>
            <person name="Takami S."/>
            <person name="Terashima Y."/>
            <person name="Suzuki O."/>
            <person name="Nakagawa S."/>
            <person name="Senoh A."/>
            <person name="Mizoguchi H."/>
            <person name="Goto Y."/>
            <person name="Shimizu F."/>
            <person name="Wakebe H."/>
            <person name="Hishigaki H."/>
            <person name="Watanabe T."/>
            <person name="Sugiyama A."/>
            <person name="Takemoto M."/>
            <person name="Kawakami B."/>
            <person name="Yamazaki M."/>
            <person name="Watanabe K."/>
            <person name="Kumagai A."/>
            <person name="Itakura S."/>
            <person name="Fukuzumi Y."/>
            <person name="Fujimori Y."/>
            <person name="Komiyama M."/>
            <person name="Tashiro H."/>
            <person name="Tanigami A."/>
            <person name="Fujiwara T."/>
            <person name="Ono T."/>
            <person name="Yamada K."/>
            <person name="Fujii Y."/>
            <person name="Ozaki K."/>
            <person name="Hirao M."/>
            <person name="Ohmori Y."/>
            <person name="Kawabata A."/>
            <person name="Hikiji T."/>
            <person name="Kobatake N."/>
            <person name="Inagaki H."/>
            <person name="Ikema Y."/>
            <person name="Okamoto S."/>
            <person name="Okitani R."/>
            <person name="Kawakami T."/>
            <person name="Noguchi S."/>
            <person name="Itoh T."/>
            <person name="Shigeta K."/>
            <person name="Senba T."/>
            <person name="Matsumura K."/>
            <person name="Nakajima Y."/>
            <person name="Mizuno T."/>
            <person name="Morinaga M."/>
            <person name="Sasaki M."/>
            <person name="Togashi T."/>
            <person name="Oyama M."/>
            <person name="Hata H."/>
            <person name="Watanabe M."/>
            <person name="Komatsu T."/>
            <person name="Mizushima-Sugano J."/>
            <person name="Satoh T."/>
            <person name="Shirai Y."/>
            <person name="Takahashi Y."/>
            <person name="Nakagawa K."/>
            <person name="Okumura K."/>
            <person name="Nagase T."/>
            <person name="Nomura N."/>
            <person name="Kikuchi H."/>
            <person name="Masuho Y."/>
            <person name="Yamashita R."/>
            <person name="Nakai K."/>
            <person name="Yada T."/>
            <person name="Nakamura Y."/>
            <person name="Ohara O."/>
            <person name="Isogai T."/>
            <person name="Sugano S."/>
        </authorList>
    </citation>
    <scope>NUCLEOTIDE SEQUENCE [LARGE SCALE MRNA] (ISOFORMS 1 AND 2)</scope>
    <source>
        <tissue>Mammary gland</tissue>
        <tissue>Umbilical cord blood</tissue>
    </source>
</reference>
<reference key="3">
    <citation type="journal article" date="2004" name="Nature">
        <title>The DNA sequence and comparative analysis of human chromosome 5.</title>
        <authorList>
            <person name="Schmutz J."/>
            <person name="Martin J."/>
            <person name="Terry A."/>
            <person name="Couronne O."/>
            <person name="Grimwood J."/>
            <person name="Lowry S."/>
            <person name="Gordon L.A."/>
            <person name="Scott D."/>
            <person name="Xie G."/>
            <person name="Huang W."/>
            <person name="Hellsten U."/>
            <person name="Tran-Gyamfi M."/>
            <person name="She X."/>
            <person name="Prabhakar S."/>
            <person name="Aerts A."/>
            <person name="Altherr M."/>
            <person name="Bajorek E."/>
            <person name="Black S."/>
            <person name="Branscomb E."/>
            <person name="Caoile C."/>
            <person name="Challacombe J.F."/>
            <person name="Chan Y.M."/>
            <person name="Denys M."/>
            <person name="Detter J.C."/>
            <person name="Escobar J."/>
            <person name="Flowers D."/>
            <person name="Fotopulos D."/>
            <person name="Glavina T."/>
            <person name="Gomez M."/>
            <person name="Gonzales E."/>
            <person name="Goodstein D."/>
            <person name="Grigoriev I."/>
            <person name="Groza M."/>
            <person name="Hammon N."/>
            <person name="Hawkins T."/>
            <person name="Haydu L."/>
            <person name="Israni S."/>
            <person name="Jett J."/>
            <person name="Kadner K."/>
            <person name="Kimball H."/>
            <person name="Kobayashi A."/>
            <person name="Lopez F."/>
            <person name="Lou Y."/>
            <person name="Martinez D."/>
            <person name="Medina C."/>
            <person name="Morgan J."/>
            <person name="Nandkeshwar R."/>
            <person name="Noonan J.P."/>
            <person name="Pitluck S."/>
            <person name="Pollard M."/>
            <person name="Predki P."/>
            <person name="Priest J."/>
            <person name="Ramirez L."/>
            <person name="Retterer J."/>
            <person name="Rodriguez A."/>
            <person name="Rogers S."/>
            <person name="Salamov A."/>
            <person name="Salazar A."/>
            <person name="Thayer N."/>
            <person name="Tice H."/>
            <person name="Tsai M."/>
            <person name="Ustaszewska A."/>
            <person name="Vo N."/>
            <person name="Wheeler J."/>
            <person name="Wu K."/>
            <person name="Yang J."/>
            <person name="Dickson M."/>
            <person name="Cheng J.-F."/>
            <person name="Eichler E.E."/>
            <person name="Olsen A."/>
            <person name="Pennacchio L.A."/>
            <person name="Rokhsar D.S."/>
            <person name="Richardson P."/>
            <person name="Lucas S.M."/>
            <person name="Myers R.M."/>
            <person name="Rubin E.M."/>
        </authorList>
    </citation>
    <scope>NUCLEOTIDE SEQUENCE [LARGE SCALE GENOMIC DNA]</scope>
</reference>
<reference key="4">
    <citation type="submission" date="2005-09" db="EMBL/GenBank/DDBJ databases">
        <authorList>
            <person name="Mural R.J."/>
            <person name="Istrail S."/>
            <person name="Sutton G.G."/>
            <person name="Florea L."/>
            <person name="Halpern A.L."/>
            <person name="Mobarry C.M."/>
            <person name="Lippert R."/>
            <person name="Walenz B."/>
            <person name="Shatkay H."/>
            <person name="Dew I."/>
            <person name="Miller J.R."/>
            <person name="Flanigan M.J."/>
            <person name="Edwards N.J."/>
            <person name="Bolanos R."/>
            <person name="Fasulo D."/>
            <person name="Halldorsson B.V."/>
            <person name="Hannenhalli S."/>
            <person name="Turner R."/>
            <person name="Yooseph S."/>
            <person name="Lu F."/>
            <person name="Nusskern D.R."/>
            <person name="Shue B.C."/>
            <person name="Zheng X.H."/>
            <person name="Zhong F."/>
            <person name="Delcher A.L."/>
            <person name="Huson D.H."/>
            <person name="Kravitz S.A."/>
            <person name="Mouchard L."/>
            <person name="Reinert K."/>
            <person name="Remington K.A."/>
            <person name="Clark A.G."/>
            <person name="Waterman M.S."/>
            <person name="Eichler E.E."/>
            <person name="Adams M.D."/>
            <person name="Hunkapiller M.W."/>
            <person name="Myers E.W."/>
            <person name="Venter J.C."/>
        </authorList>
    </citation>
    <scope>NUCLEOTIDE SEQUENCE [LARGE SCALE GENOMIC DNA]</scope>
</reference>
<reference key="5">
    <citation type="journal article" date="2004" name="Genome Res.">
        <title>The status, quality, and expansion of the NIH full-length cDNA project: the Mammalian Gene Collection (MGC).</title>
        <authorList>
            <consortium name="The MGC Project Team"/>
        </authorList>
    </citation>
    <scope>NUCLEOTIDE SEQUENCE [LARGE SCALE MRNA] (ISOFORM 1)</scope>
    <source>
        <tissue>Placenta</tissue>
    </source>
</reference>
<reference key="6">
    <citation type="journal article" date="1996" name="Genome Res.">
        <title>Transcriptional map of the Treacher Collins candidate gene region.</title>
        <authorList>
            <person name="Loftus S.K."/>
            <person name="Dixon J."/>
            <person name="Koprivnikar K."/>
            <person name="Dixon M.J."/>
            <person name="Wasmuth J.J."/>
        </authorList>
    </citation>
    <scope>NUCLEOTIDE SEQUENCE [MRNA] OF 126-420</scope>
    <source>
        <tissue>Brain</tissue>
    </source>
</reference>
<reference key="7">
    <citation type="journal article" date="2002" name="RNA">
        <title>Purification and characterization of native spliceosomes suitable for three-dimensional structural analysis.</title>
        <authorList>
            <person name="Jurica M.S."/>
            <person name="Licklider L.J."/>
            <person name="Gygi S.P."/>
            <person name="Grigorieff N."/>
            <person name="Moore M.J."/>
        </authorList>
    </citation>
    <scope>IDENTIFICATION BY MASS SPECTROMETRY</scope>
    <scope>IDENTIFICATION IN THE SPLICEOSOMAL C COMPLEX</scope>
</reference>
<reference key="8">
    <citation type="journal article" date="2006" name="Biochim. Biophys. Acta">
        <title>Nuclear translocation of the calcium-binding protein ALG-2 induced by the RNA-binding protein RBM22.</title>
        <authorList>
            <person name="Montaville P."/>
            <person name="Dai Y."/>
            <person name="Cheung C.Y."/>
            <person name="Giller K."/>
            <person name="Becker S."/>
            <person name="Michalak M."/>
            <person name="Webb S.E."/>
            <person name="Miller A.L."/>
            <person name="Krebs J."/>
        </authorList>
    </citation>
    <scope>FUNCTION</scope>
    <scope>SUBCELLULAR LOCATION</scope>
    <scope>INTERACTION WITH PDCD6</scope>
</reference>
<reference key="9">
    <citation type="journal article" date="2009" name="Anal. Chem.">
        <title>Lys-N and trypsin cover complementary parts of the phosphoproteome in a refined SCX-based approach.</title>
        <authorList>
            <person name="Gauci S."/>
            <person name="Helbig A.O."/>
            <person name="Slijper M."/>
            <person name="Krijgsveld J."/>
            <person name="Heck A.J."/>
            <person name="Mohammed S."/>
        </authorList>
    </citation>
    <scope>ACETYLATION [LARGE SCALE ANALYSIS] AT ALA-2</scope>
    <scope>CLEAVAGE OF INITIATOR METHIONINE [LARGE SCALE ANALYSIS]</scope>
    <scope>IDENTIFICATION BY MASS SPECTROMETRY [LARGE SCALE ANALYSIS]</scope>
</reference>
<reference key="10">
    <citation type="journal article" date="2009" name="Biochim. Biophys. Acta">
        <title>The influence of calcium signaling on the regulation of alternative splicing.</title>
        <authorList>
            <person name="Krebs J."/>
        </authorList>
    </citation>
    <scope>SUBCELLULAR LOCATION</scope>
    <scope>MUTAGENESIS OF LYS-170 AND LYS-324</scope>
</reference>
<reference key="11">
    <citation type="journal article" date="2009" name="Science">
        <title>Lysine acetylation targets protein complexes and co-regulates major cellular functions.</title>
        <authorList>
            <person name="Choudhary C."/>
            <person name="Kumar C."/>
            <person name="Gnad F."/>
            <person name="Nielsen M.L."/>
            <person name="Rehman M."/>
            <person name="Walther T.C."/>
            <person name="Olsen J.V."/>
            <person name="Mann M."/>
        </authorList>
    </citation>
    <scope>ACETYLATION [LARGE SCALE ANALYSIS] AT LYS-212</scope>
    <scope>IDENTIFICATION BY MASS SPECTROMETRY [LARGE SCALE ANALYSIS]</scope>
</reference>
<reference key="12">
    <citation type="journal article" date="2011" name="BMC Syst. Biol.">
        <title>Initial characterization of the human central proteome.</title>
        <authorList>
            <person name="Burkard T.R."/>
            <person name="Planyavsky M."/>
            <person name="Kaupe I."/>
            <person name="Breitwieser F.P."/>
            <person name="Buerckstuemmer T."/>
            <person name="Bennett K.L."/>
            <person name="Superti-Furga G."/>
            <person name="Colinge J."/>
        </authorList>
    </citation>
    <scope>IDENTIFICATION BY MASS SPECTROMETRY [LARGE SCALE ANALYSIS]</scope>
</reference>
<reference key="13">
    <citation type="journal article" date="2011" name="Biochim. Biophys. Acta">
        <title>Stress induced subcellular distribution of ALG-2, RBM22 and hSlu7.</title>
        <authorList>
            <person name="Janowicz A."/>
            <person name="Michalak M."/>
            <person name="Krebs J."/>
        </authorList>
    </citation>
    <scope>FUNCTION</scope>
    <scope>SUBCELLULAR LOCATION</scope>
</reference>
<reference key="14">
    <citation type="journal article" date="2012" name="EMBO J.">
        <title>Cwc2 and its human homologue RBM22 promote an active conformation of the spliceosome catalytic centre.</title>
        <authorList>
            <person name="Rasche N."/>
            <person name="Dybkov O."/>
            <person name="Schmitzova J."/>
            <person name="Akyildiz B."/>
            <person name="Fabrizio P."/>
            <person name="Luhrmann R."/>
        </authorList>
    </citation>
    <scope>FUNCTION</scope>
    <scope>RNA-BINDING</scope>
</reference>
<reference key="15">
    <citation type="journal article" date="2012" name="Mol. Cell. Proteomics">
        <title>Comparative large-scale characterisation of plant vs. mammal proteins reveals similar and idiosyncratic N-alpha acetylation features.</title>
        <authorList>
            <person name="Bienvenut W.V."/>
            <person name="Sumpton D."/>
            <person name="Martinez A."/>
            <person name="Lilla S."/>
            <person name="Espagne C."/>
            <person name="Meinnel T."/>
            <person name="Giglione C."/>
        </authorList>
    </citation>
    <scope>ACETYLATION [LARGE SCALE ANALYSIS] AT ALA-2</scope>
    <scope>CLEAVAGE OF INITIATOR METHIONINE [LARGE SCALE ANALYSIS]</scope>
    <scope>IDENTIFICATION BY MASS SPECTROMETRY [LARGE SCALE ANALYSIS]</scope>
</reference>
<reference key="16">
    <citation type="journal article" date="2012" name="Proc. Natl. Acad. Sci. U.S.A.">
        <title>N-terminal acetylome analyses and functional insights of the N-terminal acetyltransferase NatB.</title>
        <authorList>
            <person name="Van Damme P."/>
            <person name="Lasa M."/>
            <person name="Polevoda B."/>
            <person name="Gazquez C."/>
            <person name="Elosegui-Artola A."/>
            <person name="Kim D.S."/>
            <person name="De Juan-Pardo E."/>
            <person name="Demeyer K."/>
            <person name="Hole K."/>
            <person name="Larrea E."/>
            <person name="Timmerman E."/>
            <person name="Prieto J."/>
            <person name="Arnesen T."/>
            <person name="Sherman F."/>
            <person name="Gevaert K."/>
            <person name="Aldabe R."/>
        </authorList>
    </citation>
    <scope>ACETYLATION [LARGE SCALE ANALYSIS] AT ALA-2</scope>
    <scope>CLEAVAGE OF INITIATOR METHIONINE [LARGE SCALE ANALYSIS]</scope>
    <scope>IDENTIFICATION BY MASS SPECTROMETRY [LARGE SCALE ANALYSIS]</scope>
</reference>
<reference key="17">
    <citation type="journal article" date="2013" name="J. Proteome Res.">
        <title>Toward a comprehensive characterization of a human cancer cell phosphoproteome.</title>
        <authorList>
            <person name="Zhou H."/>
            <person name="Di Palma S."/>
            <person name="Preisinger C."/>
            <person name="Peng M."/>
            <person name="Polat A.N."/>
            <person name="Heck A.J."/>
            <person name="Mohammed S."/>
        </authorList>
    </citation>
    <scope>PHOSPHORYLATION [LARGE SCALE ANALYSIS] AT SER-4 AND SER-102</scope>
    <scope>IDENTIFICATION BY MASS SPECTROMETRY [LARGE SCALE ANALYSIS]</scope>
    <source>
        <tissue>Cervix carcinoma</tissue>
        <tissue>Erythroleukemia</tissue>
    </source>
</reference>
<reference key="18">
    <citation type="journal article" date="2014" name="Nat. Struct. Mol. Biol.">
        <title>Uncovering global SUMOylation signaling networks in a site-specific manner.</title>
        <authorList>
            <person name="Hendriks I.A."/>
            <person name="D'Souza R.C."/>
            <person name="Yang B."/>
            <person name="Verlaan-de Vries M."/>
            <person name="Mann M."/>
            <person name="Vertegaal A.C."/>
        </authorList>
    </citation>
    <scope>SUMOYLATION [LARGE SCALE ANALYSIS] AT LYS-149 AND LYS-290</scope>
    <scope>IDENTIFICATION BY MASS SPECTROMETRY [LARGE SCALE ANALYSIS]</scope>
</reference>
<reference key="19">
    <citation type="journal article" date="2017" name="Nat. Struct. Mol. Biol.">
        <title>Site-specific mapping of the human SUMO proteome reveals co-modification with phosphorylation.</title>
        <authorList>
            <person name="Hendriks I.A."/>
            <person name="Lyon D."/>
            <person name="Young C."/>
            <person name="Jensen L.J."/>
            <person name="Vertegaal A.C."/>
            <person name="Nielsen M.L."/>
        </authorList>
    </citation>
    <scope>SUMOYLATION [LARGE SCALE ANALYSIS] AT LYS-139</scope>
    <scope>IDENTIFICATION BY MASS SPECTROMETRY [LARGE SCALE ANALYSIS]</scope>
</reference>
<reference key="20">
    <citation type="journal article" date="2021" name="Neuron">
        <title>Mutations in Spliceosomal Genes PPIL1 and PRP17 Cause Neurodegenerative Pontocerebellar Hypoplasia with Microcephaly.</title>
        <authorList>
            <person name="Chai G."/>
            <person name="Webb A."/>
            <person name="Li C."/>
            <person name="Antaki D."/>
            <person name="Lee S."/>
            <person name="Breuss M.W."/>
            <person name="Lang N."/>
            <person name="Stanley V."/>
            <person name="Anzenberg P."/>
            <person name="Yang X."/>
            <person name="Marshall T."/>
            <person name="Gaffney P."/>
            <person name="Wierenga K.J."/>
            <person name="Chung B.H."/>
            <person name="Tsang M.H."/>
            <person name="Pais L.S."/>
            <person name="Lovgren A.K."/>
            <person name="VanNoy G.E."/>
            <person name="Rehm H.L."/>
            <person name="Mirzaa G."/>
            <person name="Leon E."/>
            <person name="Diaz J."/>
            <person name="Neumann A."/>
            <person name="Kalverda A.P."/>
            <person name="Manfield I.W."/>
            <person name="Parry D.A."/>
            <person name="Logan C.V."/>
            <person name="Johnson C.A."/>
            <person name="Bonthron D.T."/>
            <person name="Valleley E.M.A."/>
            <person name="Issa M.Y."/>
            <person name="Abdel-Ghafar S.F."/>
            <person name="Abdel-Hamid M.S."/>
            <person name="Jennings P."/>
            <person name="Zaki M.S."/>
            <person name="Sheridan E."/>
            <person name="Gleeson J.G."/>
        </authorList>
    </citation>
    <scope>INTERACTION WITH PPIL1</scope>
</reference>
<reference key="21">
    <citation type="submission" date="2007-10" db="PDB data bank">
        <title>Solution structure of RNA binding domain in pre-mRNA-splicing factor RBM22.</title>
        <authorList>
            <consortium name="RIKEN structural genomics initiative (RSGI)"/>
        </authorList>
    </citation>
    <scope>STRUCTURE BY NMR OF 227-304</scope>
</reference>
<reference evidence="20" key="22">
    <citation type="journal article" date="2017" name="Cell">
        <title>An Atomic Structure of the Human Spliceosome.</title>
        <authorList>
            <person name="Zhang X."/>
            <person name="Yan C."/>
            <person name="Hang J."/>
            <person name="Finci L.I."/>
            <person name="Lei J."/>
            <person name="Shi Y."/>
        </authorList>
    </citation>
    <scope>STRUCTURE BY ELECTRON MICROSCOPY (3.60 ANGSTROMS)</scope>
    <scope>FUNCTION</scope>
    <scope>SUBCELLULAR LOCATION</scope>
    <scope>SUBUNIT</scope>
</reference>
<reference evidence="19" key="23">
    <citation type="journal article" date="2017" name="Nature">
        <title>Cryo-EM structure of a human spliceosome activated for step 2 of splicing.</title>
        <authorList>
            <person name="Bertram K."/>
            <person name="Agafonov D.E."/>
            <person name="Liu W.T."/>
            <person name="Dybkov O."/>
            <person name="Will C.L."/>
            <person name="Hartmuth K."/>
            <person name="Urlaub H."/>
            <person name="Kastner B."/>
            <person name="Stark H."/>
            <person name="Luhrmann R."/>
        </authorList>
    </citation>
    <scope>STRUCTURE BY ELECTRON MICROSCOPY (5.90 ANGSTROMS)</scope>
    <scope>FUNCTION</scope>
    <scope>SUBCELLULAR LOCATION</scope>
    <scope>SUBUNIT</scope>
</reference>
<reference evidence="24" key="24">
    <citation type="journal article" date="2018" name="Cell">
        <title>Structure and Conformational Dynamics of the Human Spliceosomal Bact Complex.</title>
        <authorList>
            <person name="Haselbach D."/>
            <person name="Komarov I."/>
            <person name="Agafonov D.E."/>
            <person name="Hartmuth K."/>
            <person name="Graf B."/>
            <person name="Dybkov O."/>
            <person name="Urlaub H."/>
            <person name="Kastner B."/>
            <person name="Luhrmann R."/>
            <person name="Stark H."/>
        </authorList>
    </citation>
    <scope>STRUCTURE BY ELECTRON MICROSCOPY (3.40 ANGSTROMS)</scope>
    <scope>FUNCTION</scope>
    <scope>SUBCELLULAR LOCATION</scope>
    <scope>SUBUNIT</scope>
</reference>
<reference evidence="22 23" key="25">
    <citation type="journal article" date="2018" name="Cell Res.">
        <title>Structure of the human activated spliceosome in three conformational states.</title>
        <authorList>
            <person name="Zhang X."/>
            <person name="Yan C."/>
            <person name="Zhan X."/>
            <person name="Li L."/>
            <person name="Lei J."/>
            <person name="Shi Y."/>
        </authorList>
    </citation>
    <scope>STRUCTURE BY ELECTRON MICROSCOPY (5.10 ANGSTROMS)</scope>
    <scope>FUNCTION</scope>
    <scope>SUBCELLULAR LOCATION</scope>
    <scope>SUBUNIT</scope>
</reference>
<reference evidence="21" key="26">
    <citation type="journal article" date="2018" name="Science">
        <title>Structure of a human catalytic step I spliceosome.</title>
        <authorList>
            <person name="Zhan X."/>
            <person name="Yan C."/>
            <person name="Zhang X."/>
            <person name="Lei J."/>
            <person name="Shi Y."/>
        </authorList>
    </citation>
    <scope>STRUCTURE BY ELECTRON MICROSCOPY (4.10 ANGSTROMS)</scope>
    <scope>FUNCTION</scope>
    <scope>SUBCELLULAR LOCATION</scope>
    <scope>SUBUNIT</scope>
</reference>
<reference evidence="25" key="27">
    <citation type="journal article" date="2019" name="Science">
        <title>A human postcatalytic spliceosome structure reveals essential roles of metazoan factors for exon ligation.</title>
        <authorList>
            <person name="Fica S.M."/>
            <person name="Oubridge C."/>
            <person name="Wilkinson M.E."/>
            <person name="Newman A.J."/>
            <person name="Nagai K."/>
        </authorList>
    </citation>
    <scope>STRUCTURE BY ELECTRON MICROSCOPY (3.30 ANGSTROMS) OF 18-306</scope>
    <scope>FUNCTION</scope>
    <scope>SUBCELLULAR LOCATION</scope>
    <scope>SUBUNIT</scope>
</reference>
<name>RBM22_HUMAN</name>
<feature type="initiator methionine" description="Removed" evidence="26 28 29">
    <location>
        <position position="1"/>
    </location>
</feature>
<feature type="chain" id="PRO_0000250546" description="Pre-mRNA-splicing factor RBM22">
    <location>
        <begin position="2"/>
        <end position="420"/>
    </location>
</feature>
<feature type="domain" description="RRM" evidence="2">
    <location>
        <begin position="232"/>
        <end position="305"/>
    </location>
</feature>
<feature type="zinc finger region" description="C3H1-type" evidence="3">
    <location>
        <begin position="159"/>
        <end position="186"/>
    </location>
</feature>
<feature type="region of interest" description="Disordered" evidence="4">
    <location>
        <begin position="303"/>
        <end position="343"/>
    </location>
</feature>
<feature type="region of interest" description="Disordered" evidence="4">
    <location>
        <begin position="372"/>
        <end position="420"/>
    </location>
</feature>
<feature type="compositionally biased region" description="Basic and acidic residues" evidence="4">
    <location>
        <begin position="309"/>
        <end position="318"/>
    </location>
</feature>
<feature type="modified residue" description="N-acetylalanine" evidence="26 28 29">
    <location>
        <position position="2"/>
    </location>
</feature>
<feature type="modified residue" description="Phosphoserine" evidence="30">
    <location>
        <position position="4"/>
    </location>
</feature>
<feature type="modified residue" description="Phosphoserine" evidence="30">
    <location>
        <position position="102"/>
    </location>
</feature>
<feature type="modified residue" description="N6-acetyllysine" evidence="27">
    <location>
        <position position="212"/>
    </location>
</feature>
<feature type="cross-link" description="Glycyl lysine isopeptide (Lys-Gly) (interchain with G-Cter in SUMO2)" evidence="32">
    <location>
        <position position="139"/>
    </location>
</feature>
<feature type="cross-link" description="Glycyl lysine isopeptide (Lys-Gly) (interchain with G-Cter in SUMO2)" evidence="31">
    <location>
        <position position="149"/>
    </location>
</feature>
<feature type="cross-link" description="Glycyl lysine isopeptide (Lys-Gly) (interchain with G-Cter in SUMO2)" evidence="31">
    <location>
        <position position="290"/>
    </location>
</feature>
<feature type="splice variant" id="VSP_036832" description="In isoform 2." evidence="17">
    <location>
        <begin position="43"/>
        <end position="91"/>
    </location>
</feature>
<feature type="mutagenesis site" description="Accumulates in speckle-like structures." evidence="7">
    <original>K</original>
    <variation>R</variation>
    <location>
        <position position="170"/>
    </location>
</feature>
<feature type="mutagenesis site" description="Accumulates in speckle-like structures." evidence="7">
    <original>K</original>
    <variation>R</variation>
    <location>
        <position position="324"/>
    </location>
</feature>
<feature type="strand" evidence="35">
    <location>
        <begin position="25"/>
        <end position="28"/>
    </location>
</feature>
<feature type="strand" evidence="35">
    <location>
        <begin position="32"/>
        <end position="39"/>
    </location>
</feature>
<feature type="strand" evidence="35">
    <location>
        <begin position="46"/>
        <end position="48"/>
    </location>
</feature>
<feature type="strand" evidence="35">
    <location>
        <begin position="54"/>
        <end position="57"/>
    </location>
</feature>
<feature type="strand" evidence="35">
    <location>
        <begin position="60"/>
        <end position="63"/>
    </location>
</feature>
<feature type="helix" evidence="35">
    <location>
        <begin position="73"/>
        <end position="76"/>
    </location>
</feature>
<feature type="turn" evidence="35">
    <location>
        <begin position="77"/>
        <end position="79"/>
    </location>
</feature>
<feature type="turn" evidence="35">
    <location>
        <begin position="82"/>
        <end position="84"/>
    </location>
</feature>
<feature type="strand" evidence="35">
    <location>
        <begin position="87"/>
        <end position="90"/>
    </location>
</feature>
<feature type="helix" evidence="35">
    <location>
        <begin position="94"/>
        <end position="99"/>
    </location>
</feature>
<feature type="helix" evidence="35">
    <location>
        <begin position="111"/>
        <end position="126"/>
    </location>
</feature>
<feature type="strand" evidence="34">
    <location>
        <begin position="130"/>
        <end position="132"/>
    </location>
</feature>
<feature type="turn" evidence="35">
    <location>
        <begin position="134"/>
        <end position="136"/>
    </location>
</feature>
<feature type="helix" evidence="35">
    <location>
        <begin position="138"/>
        <end position="141"/>
    </location>
</feature>
<feature type="helix" evidence="35">
    <location>
        <begin position="146"/>
        <end position="149"/>
    </location>
</feature>
<feature type="helix" evidence="33">
    <location>
        <begin position="157"/>
        <end position="160"/>
    </location>
</feature>
<feature type="turn" evidence="35">
    <location>
        <begin position="166"/>
        <end position="171"/>
    </location>
</feature>
<feature type="strand" evidence="33">
    <location>
        <begin position="173"/>
        <end position="175"/>
    </location>
</feature>
<feature type="helix" evidence="34">
    <location>
        <begin position="176"/>
        <end position="178"/>
    </location>
</feature>
<feature type="strand" evidence="35">
    <location>
        <begin position="189"/>
        <end position="191"/>
    </location>
</feature>
<feature type="helix" evidence="35">
    <location>
        <begin position="192"/>
        <end position="194"/>
    </location>
</feature>
<feature type="helix" evidence="35">
    <location>
        <begin position="198"/>
        <end position="203"/>
    </location>
</feature>
<feature type="helix" evidence="35">
    <location>
        <begin position="208"/>
        <end position="219"/>
    </location>
</feature>
<feature type="strand" evidence="36">
    <location>
        <begin position="228"/>
        <end position="230"/>
    </location>
</feature>
<feature type="strand" evidence="35">
    <location>
        <begin position="234"/>
        <end position="237"/>
    </location>
</feature>
<feature type="strand" evidence="34">
    <location>
        <begin position="241"/>
        <end position="243"/>
    </location>
</feature>
<feature type="helix" evidence="35">
    <location>
        <begin position="245"/>
        <end position="252"/>
    </location>
</feature>
<feature type="helix" evidence="35">
    <location>
        <begin position="253"/>
        <end position="255"/>
    </location>
</feature>
<feature type="strand" evidence="34">
    <location>
        <begin position="258"/>
        <end position="264"/>
    </location>
</feature>
<feature type="turn" evidence="35">
    <location>
        <begin position="265"/>
        <end position="268"/>
    </location>
</feature>
<feature type="strand" evidence="35">
    <location>
        <begin position="269"/>
        <end position="272"/>
    </location>
</feature>
<feature type="helix" evidence="35">
    <location>
        <begin position="277"/>
        <end position="287"/>
    </location>
</feature>
<feature type="turn" evidence="35">
    <location>
        <begin position="288"/>
        <end position="290"/>
    </location>
</feature>
<feature type="strand" evidence="35">
    <location>
        <begin position="299"/>
        <end position="301"/>
    </location>
</feature>
<gene>
    <name type="primary">RBM22</name>
    <name type="synonym">ZC3H16</name>
    <name type="ORF">199G4</name>
</gene>
<protein>
    <recommendedName>
        <fullName>Pre-mRNA-splicing factor RBM22</fullName>
    </recommendedName>
    <alternativeName>
        <fullName>RNA-binding motif protein 22</fullName>
    </alternativeName>
    <alternativeName>
        <fullName>Zinc finger CCCH domain-containing protein 16</fullName>
    </alternativeName>
</protein>
<comment type="function">
    <text evidence="6 8 9 10 11 12 13 14 15">Required for pre-mRNA splicing as component of the activated spliceosome (PubMed:28076346, PubMed:28502770, PubMed:29301961, PubMed:29360106, PubMed:29361316, PubMed:30705154). Involved in the first step of pre-mRNA splicing. Binds directly to the internal stem-loop (ISL) domain of the U6 snRNA and to the pre-mRNA intron near the 5' splice site during the activation and catalytic phases of the spliceosome cycle. Involved in both translocations of the nuclear SLU7 to the cytoplasm and the cytosolic calcium-binding protein PDCD6 to the nucleus upon cellular stress responses.</text>
</comment>
<comment type="subunit">
    <text evidence="5 6 10 11 12 13 14 15 16">Component of the pre-catalytic and catalytic spliceosome complexes (PubMed:11991638, PubMed:28076346, PubMed:28502770, PubMed:29301961, PubMed:29360106, PubMed:29361316). Component of the postcatalytic spliceosome P complex (PubMed:30705154). Interacts with PDCD6; the interaction induces translocation of PDCD6 in the cytoplasm. Interacts with PPIL1 (PubMed:33220177).</text>
</comment>
<comment type="interaction">
    <interactant intactId="EBI-2602260">
        <id>Q9NW64</id>
    </interactant>
    <interactant intactId="EBI-747776">
        <id>Q53EZ4</id>
        <label>CEP55</label>
    </interactant>
    <organismsDiffer>false</organismsDiffer>
    <experiments>6</experiments>
</comment>
<comment type="interaction">
    <interactant intactId="EBI-2602260">
        <id>Q9NW64</id>
    </interactant>
    <interactant intactId="EBI-3867333">
        <id>A8MQ03</id>
        <label>CYSRT1</label>
    </interactant>
    <organismsDiffer>false</organismsDiffer>
    <experiments>3</experiments>
</comment>
<comment type="interaction">
    <interactant intactId="EBI-2602260">
        <id>Q9NW64</id>
    </interactant>
    <interactant intactId="EBI-947774">
        <id>O75420</id>
        <label>GIGYF1</label>
    </interactant>
    <organismsDiffer>false</organismsDiffer>
    <experiments>3</experiments>
</comment>
<comment type="interaction">
    <interactant intactId="EBI-2602260">
        <id>Q9NW64</id>
    </interactant>
    <interactant intactId="EBI-618309">
        <id>Q08379</id>
        <label>GOLGA2</label>
    </interactant>
    <organismsDiffer>false</organismsDiffer>
    <experiments>3</experiments>
</comment>
<comment type="interaction">
    <interactant intactId="EBI-2602260">
        <id>Q9NW64</id>
    </interactant>
    <interactant intactId="EBI-748420">
        <id>Q9NSC5</id>
        <label>HOMER3</label>
    </interactant>
    <organismsDiffer>false</organismsDiffer>
    <experiments>3</experiments>
</comment>
<comment type="interaction">
    <interactant intactId="EBI-2602260">
        <id>Q9NW64</id>
    </interactant>
    <interactant intactId="EBI-10963850">
        <id>Q9NZQ3-3</id>
        <label>NCKIPSD</label>
    </interactant>
    <organismsDiffer>false</organismsDiffer>
    <experiments>5</experiments>
</comment>
<comment type="subcellular location">
    <subcellularLocation>
        <location evidence="6 8 10 11 12 13 14 15">Nucleus</location>
    </subcellularLocation>
    <subcellularLocation>
        <location evidence="8">Cytoplasm</location>
    </subcellularLocation>
    <text evidence="8">Nearly exclusively nuclear. Translocated from the nucleus to the cytoplasm after heat shock cell treatment. May be shuttling between the nucleus and the cytosol.</text>
</comment>
<comment type="alternative products">
    <event type="alternative splicing"/>
    <isoform>
        <id>Q9NW64-1</id>
        <name>1</name>
        <sequence type="displayed"/>
    </isoform>
    <isoform>
        <id>Q9NW64-2</id>
        <name>2</name>
        <sequence type="described" ref="VSP_036832"/>
    </isoform>
</comment>
<comment type="domain">
    <text evidence="1">The C-terminal RRM domain and the zinc finger motif are necessary for RNA-binding.</text>
</comment>
<comment type="similarity">
    <text evidence="18">Belongs to the SLT11 family.</text>
</comment>
<comment type="sequence caution" evidence="18">
    <conflict type="miscellaneous discrepancy">
        <sequence resource="EMBL-CDS" id="AAC99998"/>
    </conflict>
    <text>Chimera.</text>
</comment>
<sequence>MATSLGSNTYNRQNWEDADFPILCQTCLGENPYIRMTKEKYGKECKICARPFTVFRWCPGVRMRFKKTEVCQTCSKLKNVCQTCLLDLEYGLPIQVRDAGLSFKDDMPKSDVNKEYYTQNMEREISNSDGTRPVGMLGKATSTSDMLLKLARTTPYYKRNRPHICSFWVKGECKRGEECPYRHEKPTDPDDPLADQNIKDRYYGINDPVADKLLKRASTMPRLDPPEDKTITTLYVGGLGDTITETDLRNHFYQFGEIRTITVVQRQQCAFIQFATRQAAEVAAEKSFNKLIVNGRRLNVKWGRSQAARGKEKEKDGTTDSGIKLEPVPGLPGALPPPPAAEEEASANYFNLPPSGPPAVVNIALPPPPGIAPPPPPGFGPHMFHPMGPPPPFMRAPGPIHYPSQDPQRMGAHAGKHSSP</sequence>
<accession>Q9NW64</accession>
<accession>A6NDM5</accession>
<accession>B4DLI9</accession>
<accession>O95607</accession>
<organism>
    <name type="scientific">Homo sapiens</name>
    <name type="common">Human</name>
    <dbReference type="NCBI Taxonomy" id="9606"/>
    <lineage>
        <taxon>Eukaryota</taxon>
        <taxon>Metazoa</taxon>
        <taxon>Chordata</taxon>
        <taxon>Craniata</taxon>
        <taxon>Vertebrata</taxon>
        <taxon>Euteleostomi</taxon>
        <taxon>Mammalia</taxon>
        <taxon>Eutheria</taxon>
        <taxon>Euarchontoglires</taxon>
        <taxon>Primates</taxon>
        <taxon>Haplorrhini</taxon>
        <taxon>Catarrhini</taxon>
        <taxon>Hominidae</taxon>
        <taxon>Homo</taxon>
    </lineage>
</organism>
<keyword id="KW-0002">3D-structure</keyword>
<keyword id="KW-0007">Acetylation</keyword>
<keyword id="KW-0025">Alternative splicing</keyword>
<keyword id="KW-0963">Cytoplasm</keyword>
<keyword id="KW-1017">Isopeptide bond</keyword>
<keyword id="KW-0479">Metal-binding</keyword>
<keyword id="KW-0507">mRNA processing</keyword>
<keyword id="KW-0508">mRNA splicing</keyword>
<keyword id="KW-0539">Nucleus</keyword>
<keyword id="KW-0597">Phosphoprotein</keyword>
<keyword id="KW-1267">Proteomics identification</keyword>
<keyword id="KW-1185">Reference proteome</keyword>
<keyword id="KW-0694">RNA-binding</keyword>
<keyword id="KW-0747">Spliceosome</keyword>
<keyword id="KW-0813">Transport</keyword>
<keyword id="KW-0832">Ubl conjugation</keyword>
<keyword id="KW-0862">Zinc</keyword>
<keyword id="KW-0863">Zinc-finger</keyword>